<keyword id="KW-0007">Acetylation</keyword>
<keyword id="KW-0967">Endosome</keyword>
<keyword id="KW-0333">Golgi apparatus</keyword>
<keyword id="KW-0472">Membrane</keyword>
<keyword id="KW-0597">Phosphoprotein</keyword>
<keyword id="KW-0653">Protein transport</keyword>
<keyword id="KW-1185">Reference proteome</keyword>
<keyword id="KW-0812">Transmembrane</keyword>
<keyword id="KW-1133">Transmembrane helix</keyword>
<keyword id="KW-0813">Transport</keyword>
<name>SCAM1_PIG</name>
<dbReference type="EMBL" id="AJ223734">
    <property type="protein sequence ID" value="CAA11536.1"/>
    <property type="molecule type" value="Genomic_DNA"/>
</dbReference>
<dbReference type="EMBL" id="AJ223735">
    <property type="protein sequence ID" value="CAA11536.1"/>
    <property type="status" value="JOINED"/>
    <property type="molecule type" value="Genomic_DNA"/>
</dbReference>
<dbReference type="EMBL" id="AJ223736">
    <property type="protein sequence ID" value="CAA11536.1"/>
    <property type="status" value="JOINED"/>
    <property type="molecule type" value="Genomic_DNA"/>
</dbReference>
<dbReference type="EMBL" id="AJ223737">
    <property type="protein sequence ID" value="CAA11536.1"/>
    <property type="status" value="JOINED"/>
    <property type="molecule type" value="Genomic_DNA"/>
</dbReference>
<dbReference type="EMBL" id="AJ223738">
    <property type="protein sequence ID" value="CAA11536.1"/>
    <property type="status" value="JOINED"/>
    <property type="molecule type" value="Genomic_DNA"/>
</dbReference>
<dbReference type="EMBL" id="AJ223739">
    <property type="protein sequence ID" value="CAA11536.1"/>
    <property type="status" value="JOINED"/>
    <property type="molecule type" value="Genomic_DNA"/>
</dbReference>
<dbReference type="EMBL" id="AJ223740">
    <property type="protein sequence ID" value="CAA11536.1"/>
    <property type="status" value="JOINED"/>
    <property type="molecule type" value="Genomic_DNA"/>
</dbReference>
<dbReference type="EMBL" id="AJ223741">
    <property type="protein sequence ID" value="CAA11536.1"/>
    <property type="status" value="JOINED"/>
    <property type="molecule type" value="Genomic_DNA"/>
</dbReference>
<dbReference type="EMBL" id="AJ223742">
    <property type="protein sequence ID" value="CAA11536.1"/>
    <property type="status" value="JOINED"/>
    <property type="molecule type" value="Genomic_DNA"/>
</dbReference>
<dbReference type="EMBL" id="Y15710">
    <property type="protein sequence ID" value="CAA75731.1"/>
    <property type="molecule type" value="mRNA"/>
</dbReference>
<dbReference type="RefSeq" id="NP_999410.1">
    <property type="nucleotide sequence ID" value="NM_214245.1"/>
</dbReference>
<dbReference type="RefSeq" id="XP_013842293.1">
    <property type="nucleotide sequence ID" value="XM_013986839.1"/>
</dbReference>
<dbReference type="SMR" id="O77735"/>
<dbReference type="FunCoup" id="O77735">
    <property type="interactions" value="1535"/>
</dbReference>
<dbReference type="STRING" id="9823.ENSSSCP00000057282"/>
<dbReference type="PaxDb" id="9823-ENSSSCP00000014995"/>
<dbReference type="PeptideAtlas" id="O77735"/>
<dbReference type="Ensembl" id="ENSSSCT00000054996.3">
    <property type="protein sequence ID" value="ENSSSCP00000057282.3"/>
    <property type="gene ID" value="ENSSSCG00000034795.3"/>
</dbReference>
<dbReference type="Ensembl" id="ENSSSCT00055038469.1">
    <property type="protein sequence ID" value="ENSSSCP00055030564.1"/>
    <property type="gene ID" value="ENSSSCG00055019570.1"/>
</dbReference>
<dbReference type="Ensembl" id="ENSSSCT00070010296.1">
    <property type="protein sequence ID" value="ENSSSCP00070008446.1"/>
    <property type="gene ID" value="ENSSSCG00070005425.1"/>
</dbReference>
<dbReference type="Ensembl" id="ENSSSCT00085033461">
    <property type="protein sequence ID" value="ENSSSCP00085023025"/>
    <property type="gene ID" value="ENSSSCG00085017613"/>
</dbReference>
<dbReference type="Ensembl" id="ENSSSCT00090046976">
    <property type="protein sequence ID" value="ENSSSCP00090029114"/>
    <property type="gene ID" value="ENSSSCG00090026591"/>
</dbReference>
<dbReference type="Ensembl" id="ENSSSCT00105075144">
    <property type="protein sequence ID" value="ENSSSCP00105053158"/>
    <property type="gene ID" value="ENSSSCG00105039440"/>
</dbReference>
<dbReference type="Ensembl" id="ENSSSCT00110029495">
    <property type="protein sequence ID" value="ENSSSCP00110019940"/>
    <property type="gene ID" value="ENSSSCG00110015455"/>
</dbReference>
<dbReference type="Ensembl" id="ENSSSCT00115037269">
    <property type="protein sequence ID" value="ENSSSCP00115035209"/>
    <property type="gene ID" value="ENSSSCG00115021061"/>
</dbReference>
<dbReference type="Ensembl" id="ENSSSCT00130064949">
    <property type="protein sequence ID" value="ENSSSCP00130046589"/>
    <property type="gene ID" value="ENSSSCG00130033228"/>
</dbReference>
<dbReference type="GeneID" id="397477"/>
<dbReference type="KEGG" id="ssc:397477"/>
<dbReference type="CTD" id="9522"/>
<dbReference type="VGNC" id="VGNC:92605">
    <property type="gene designation" value="SCAMP1"/>
</dbReference>
<dbReference type="eggNOG" id="KOG3088">
    <property type="taxonomic scope" value="Eukaryota"/>
</dbReference>
<dbReference type="GeneTree" id="ENSGT00940000157310"/>
<dbReference type="InParanoid" id="O77735"/>
<dbReference type="OMA" id="NMVACIF"/>
<dbReference type="OrthoDB" id="242866at2759"/>
<dbReference type="Reactome" id="R-SSC-6798695">
    <property type="pathway name" value="Neutrophil degranulation"/>
</dbReference>
<dbReference type="Proteomes" id="UP000008227">
    <property type="component" value="Chromosome 2"/>
</dbReference>
<dbReference type="Proteomes" id="UP000314985">
    <property type="component" value="Chromosome 2"/>
</dbReference>
<dbReference type="Proteomes" id="UP000694570">
    <property type="component" value="Unplaced"/>
</dbReference>
<dbReference type="Proteomes" id="UP000694571">
    <property type="component" value="Unplaced"/>
</dbReference>
<dbReference type="Proteomes" id="UP000694720">
    <property type="component" value="Unplaced"/>
</dbReference>
<dbReference type="Proteomes" id="UP000694722">
    <property type="component" value="Unplaced"/>
</dbReference>
<dbReference type="Proteomes" id="UP000694723">
    <property type="component" value="Unplaced"/>
</dbReference>
<dbReference type="Proteomes" id="UP000694724">
    <property type="component" value="Unplaced"/>
</dbReference>
<dbReference type="Proteomes" id="UP000694725">
    <property type="component" value="Unplaced"/>
</dbReference>
<dbReference type="Proteomes" id="UP000694726">
    <property type="component" value="Unplaced"/>
</dbReference>
<dbReference type="Proteomes" id="UP000694727">
    <property type="component" value="Unplaced"/>
</dbReference>
<dbReference type="Proteomes" id="UP000694728">
    <property type="component" value="Unplaced"/>
</dbReference>
<dbReference type="GO" id="GO:0016020">
    <property type="term" value="C:membrane"/>
    <property type="evidence" value="ECO:0000250"/>
    <property type="project" value="UniProtKB"/>
</dbReference>
<dbReference type="GO" id="GO:0055038">
    <property type="term" value="C:recycling endosome membrane"/>
    <property type="evidence" value="ECO:0000250"/>
    <property type="project" value="UniProtKB"/>
</dbReference>
<dbReference type="GO" id="GO:0030672">
    <property type="term" value="C:synaptic vesicle membrane"/>
    <property type="evidence" value="ECO:0007669"/>
    <property type="project" value="Ensembl"/>
</dbReference>
<dbReference type="GO" id="GO:0005802">
    <property type="term" value="C:trans-Golgi network"/>
    <property type="evidence" value="ECO:0000250"/>
    <property type="project" value="UniProtKB"/>
</dbReference>
<dbReference type="GO" id="GO:0042589">
    <property type="term" value="C:zymogen granule membrane"/>
    <property type="evidence" value="ECO:0007669"/>
    <property type="project" value="Ensembl"/>
</dbReference>
<dbReference type="GO" id="GO:0051649">
    <property type="term" value="P:establishment of localization in cell"/>
    <property type="evidence" value="ECO:0007669"/>
    <property type="project" value="Ensembl"/>
</dbReference>
<dbReference type="GO" id="GO:0006887">
    <property type="term" value="P:exocytosis"/>
    <property type="evidence" value="ECO:0007669"/>
    <property type="project" value="Ensembl"/>
</dbReference>
<dbReference type="GO" id="GO:0015031">
    <property type="term" value="P:protein transport"/>
    <property type="evidence" value="ECO:0000250"/>
    <property type="project" value="UniProtKB"/>
</dbReference>
<dbReference type="InterPro" id="IPR007273">
    <property type="entry name" value="SCAMP"/>
</dbReference>
<dbReference type="PANTHER" id="PTHR10687:SF8">
    <property type="entry name" value="SECRETORY CARRIER-ASSOCIATED MEMBRANE PROTEIN 1"/>
    <property type="match status" value="1"/>
</dbReference>
<dbReference type="PANTHER" id="PTHR10687">
    <property type="entry name" value="SECRETORY CARRIER-ASSOCIATED MEMBRANE PROTEIN SCAMP"/>
    <property type="match status" value="1"/>
</dbReference>
<dbReference type="Pfam" id="PF04144">
    <property type="entry name" value="SCAMP"/>
    <property type="match status" value="1"/>
</dbReference>
<organism>
    <name type="scientific">Sus scrofa</name>
    <name type="common">Pig</name>
    <dbReference type="NCBI Taxonomy" id="9823"/>
    <lineage>
        <taxon>Eukaryota</taxon>
        <taxon>Metazoa</taxon>
        <taxon>Chordata</taxon>
        <taxon>Craniata</taxon>
        <taxon>Vertebrata</taxon>
        <taxon>Euteleostomi</taxon>
        <taxon>Mammalia</taxon>
        <taxon>Eutheria</taxon>
        <taxon>Laurasiatheria</taxon>
        <taxon>Artiodactyla</taxon>
        <taxon>Suina</taxon>
        <taxon>Suidae</taxon>
        <taxon>Sus</taxon>
    </lineage>
</organism>
<gene>
    <name type="primary">SCAMP1</name>
</gene>
<accession>O77735</accession>
<reference key="1">
    <citation type="journal article" date="1998" name="Mamm. Genome">
        <title>Structural and functional analysis of the porcine secretory carrier membrane protein 1 gene (SCAMP1).</title>
        <authorList>
            <person name="Wen G."/>
            <person name="Leeb T."/>
            <person name="Hui D."/>
            <person name="Baumgartner B.G."/>
            <person name="Robic A."/>
            <person name="Hameister H."/>
            <person name="Brenig B."/>
        </authorList>
    </citation>
    <scope>NUCLEOTIDE SEQUENCE [GENOMIC DNA / MRNA]</scope>
    <source>
        <strain>German Landrace</strain>
        <tissue>Brain</tissue>
        <tissue>Liver</tissue>
    </source>
</reference>
<proteinExistence type="evidence at transcript level"/>
<feature type="initiator methionine" description="Removed" evidence="2">
    <location>
        <position position="1"/>
    </location>
</feature>
<feature type="chain" id="PRO_0000191252" description="Secretory carrier-associated membrane protein 1">
    <location>
        <begin position="2"/>
        <end position="338"/>
    </location>
</feature>
<feature type="topological domain" description="Cytoplasmic" evidence="4">
    <location>
        <begin position="2"/>
        <end position="155"/>
    </location>
</feature>
<feature type="transmembrane region" description="Helical" evidence="4">
    <location>
        <begin position="156"/>
        <end position="176"/>
    </location>
</feature>
<feature type="topological domain" description="Lumenal" evidence="4">
    <location>
        <begin position="177"/>
        <end position="181"/>
    </location>
</feature>
<feature type="transmembrane region" description="Helical" evidence="4">
    <location>
        <begin position="182"/>
        <end position="202"/>
    </location>
</feature>
<feature type="topological domain" description="Cytoplasmic" evidence="4">
    <location>
        <begin position="203"/>
        <end position="217"/>
    </location>
</feature>
<feature type="transmembrane region" description="Helical" evidence="4">
    <location>
        <begin position="218"/>
        <end position="238"/>
    </location>
</feature>
<feature type="topological domain" description="Lumenal" evidence="4">
    <location>
        <begin position="239"/>
        <end position="261"/>
    </location>
</feature>
<feature type="transmembrane region" description="Helical" evidence="4">
    <location>
        <begin position="262"/>
        <end position="282"/>
    </location>
</feature>
<feature type="topological domain" description="Cytoplasmic" evidence="4">
    <location>
        <begin position="283"/>
        <end position="338"/>
    </location>
</feature>
<feature type="region of interest" description="Disordered" evidence="5">
    <location>
        <begin position="1"/>
        <end position="63"/>
    </location>
</feature>
<feature type="modified residue" description="N-acetylserine" evidence="2">
    <location>
        <position position="2"/>
    </location>
</feature>
<feature type="modified residue" description="Phosphoserine" evidence="3">
    <location>
        <position position="2"/>
    </location>
</feature>
<feature type="modified residue" description="Phosphothreonine" evidence="2">
    <location>
        <position position="45"/>
    </location>
</feature>
<comment type="function">
    <text>Functions in post-Golgi recycling pathways. Acts as a recycling carrier to the cell surface.</text>
</comment>
<comment type="subunit">
    <text evidence="1">Interacts with SYNRG, ITSN1 and SLC9A7.</text>
</comment>
<comment type="subcellular location">
    <subcellularLocation>
        <location evidence="1">Golgi apparatus</location>
        <location evidence="1">trans-Golgi network membrane</location>
        <topology evidence="1">Multi-pass membrane protein</topology>
    </subcellularLocation>
    <subcellularLocation>
        <location evidence="1">Recycling endosome membrane</location>
        <topology evidence="1">Multi-pass membrane protein</topology>
    </subcellularLocation>
</comment>
<comment type="similarity">
    <text evidence="6">Belongs to the SCAMP family.</text>
</comment>
<evidence type="ECO:0000250" key="1"/>
<evidence type="ECO:0000250" key="2">
    <source>
        <dbReference type="UniProtKB" id="O15126"/>
    </source>
</evidence>
<evidence type="ECO:0000250" key="3">
    <source>
        <dbReference type="UniProtKB" id="P56603"/>
    </source>
</evidence>
<evidence type="ECO:0000255" key="4"/>
<evidence type="ECO:0000256" key="5">
    <source>
        <dbReference type="SAM" id="MobiDB-lite"/>
    </source>
</evidence>
<evidence type="ECO:0000305" key="6"/>
<sequence>MSDFDSNPFADPDLNNPFKDPSVTQVTRNVPPGLDEYNPFSDSRTPPPGNVKMPNVPSTQPAIMKPTEEHPAYTQIAKEHALAQAELLKRQEELERKAAELDRREREMQNLSQHGRKNNWPPLPGNFPVGPCFYQDFSVDIPVEFQKTVKIMYYLWMFHAVTLFLNIFGCLAWFCVDPSRGVDFGLSILWFLLFTPCSFVCWYRPLYGAFRSDSSFRFFVFFFVYICQFAVHVLQAAGFHNWGNCGWISSLTGLNQSIPVGIMMIIIAALFTASAVISLVMFKKVHGLYRTTGASFEKAQQEFATGVMSNKTVQTAAANAASTAATSAAQNAFKGNQI</sequence>
<protein>
    <recommendedName>
        <fullName>Secretory carrier-associated membrane protein 1</fullName>
        <shortName>Secretory carrier membrane protein 1</shortName>
    </recommendedName>
</protein>